<gene>
    <name evidence="1" type="primary">ackA</name>
    <name type="ordered locus">Lxx03420</name>
</gene>
<sequence>MSAVLVVNSGSSSLKYQLIDAKSEEALATGLIERVGEGEGRIRHRGPGGSAEYTLVIPDHTAAFRAMLAAFGTDGSSLVEHPLDAVGHRVVHGGKRFFEPTIVTPLVEANIDDLADLAPLHNPANLDGIRAARQAFPAVPHVAVFDTAFHQTLEPAAYTYAIDAALAEEHRVRRYGFHGTSHKYVSGAVAELLGRPLGELKQIVLHLGNGASACAVDGGRSIDTSMGMTPLEGLVMGTRSGDIDPAVLFHLSRRAGLGIDELDELLNRRSGLLGLTGHGDMRDVRRVAESGDAVARLALDTVAHRLKHYIGAYTALLGGLDALTFTAGVGENDPDLRAAACKGLGVLGIQLDPERNAARSPGARIVSADGSPVTVLVVPTNEELEIARQALQAVAAG</sequence>
<reference key="1">
    <citation type="journal article" date="2004" name="Mol. Plant Microbe Interact.">
        <title>The genome sequence of the Gram-positive sugarcane pathogen Leifsonia xyli subsp. xyli.</title>
        <authorList>
            <person name="Monteiro-Vitorello C.B."/>
            <person name="Camargo L.E.A."/>
            <person name="Van Sluys M.A."/>
            <person name="Kitajima J.P."/>
            <person name="Truffi D."/>
            <person name="do Amaral A.M."/>
            <person name="Harakava R."/>
            <person name="de Oliveira J.C.F."/>
            <person name="Wood D."/>
            <person name="de Oliveira M.C."/>
            <person name="Miyaki C.Y."/>
            <person name="Takita M.A."/>
            <person name="da Silva A.C.R."/>
            <person name="Furlan L.R."/>
            <person name="Carraro D.M."/>
            <person name="Camarotte G."/>
            <person name="Almeida N.F. Jr."/>
            <person name="Carrer H."/>
            <person name="Coutinho L.L."/>
            <person name="El-Dorry H.A."/>
            <person name="Ferro M.I.T."/>
            <person name="Gagliardi P.R."/>
            <person name="Giglioti E."/>
            <person name="Goldman M.H.S."/>
            <person name="Goldman G.H."/>
            <person name="Kimura E.T."/>
            <person name="Ferro E.S."/>
            <person name="Kuramae E.E."/>
            <person name="Lemos E.G.M."/>
            <person name="Lemos M.V.F."/>
            <person name="Mauro S.M.Z."/>
            <person name="Machado M.A."/>
            <person name="Marino C.L."/>
            <person name="Menck C.F."/>
            <person name="Nunes L.R."/>
            <person name="Oliveira R.C."/>
            <person name="Pereira G.G."/>
            <person name="Siqueira W."/>
            <person name="de Souza A.A."/>
            <person name="Tsai S.M."/>
            <person name="Zanca A.S."/>
            <person name="Simpson A.J.G."/>
            <person name="Brumbley S.M."/>
            <person name="Setubal J.C."/>
        </authorList>
    </citation>
    <scope>NUCLEOTIDE SEQUENCE [LARGE SCALE GENOMIC DNA]</scope>
    <source>
        <strain>CTCB07</strain>
    </source>
</reference>
<name>ACKA_LEIXX</name>
<feature type="chain" id="PRO_0000107574" description="Acetate kinase">
    <location>
        <begin position="1"/>
        <end position="397"/>
    </location>
</feature>
<feature type="active site" description="Proton donor/acceptor" evidence="1">
    <location>
        <position position="146"/>
    </location>
</feature>
<feature type="binding site" evidence="1">
    <location>
        <position position="8"/>
    </location>
    <ligand>
        <name>Mg(2+)</name>
        <dbReference type="ChEBI" id="CHEBI:18420"/>
    </ligand>
</feature>
<feature type="binding site" evidence="1">
    <location>
        <position position="15"/>
    </location>
    <ligand>
        <name>ATP</name>
        <dbReference type="ChEBI" id="CHEBI:30616"/>
    </ligand>
</feature>
<feature type="binding site" evidence="1">
    <location>
        <position position="89"/>
    </location>
    <ligand>
        <name>substrate</name>
    </ligand>
</feature>
<feature type="binding site" evidence="1">
    <location>
        <begin position="206"/>
        <end position="210"/>
    </location>
    <ligand>
        <name>ATP</name>
        <dbReference type="ChEBI" id="CHEBI:30616"/>
    </ligand>
</feature>
<feature type="binding site" evidence="1">
    <location>
        <begin position="280"/>
        <end position="282"/>
    </location>
    <ligand>
        <name>ATP</name>
        <dbReference type="ChEBI" id="CHEBI:30616"/>
    </ligand>
</feature>
<feature type="binding site" evidence="1">
    <location>
        <begin position="328"/>
        <end position="332"/>
    </location>
    <ligand>
        <name>ATP</name>
        <dbReference type="ChEBI" id="CHEBI:30616"/>
    </ligand>
</feature>
<feature type="binding site" evidence="1">
    <location>
        <position position="382"/>
    </location>
    <ligand>
        <name>Mg(2+)</name>
        <dbReference type="ChEBI" id="CHEBI:18420"/>
    </ligand>
</feature>
<feature type="site" description="Transition state stabilizer" evidence="1">
    <location>
        <position position="178"/>
    </location>
</feature>
<feature type="site" description="Transition state stabilizer" evidence="1">
    <location>
        <position position="239"/>
    </location>
</feature>
<accession>Q6AGY7</accession>
<evidence type="ECO:0000255" key="1">
    <source>
        <dbReference type="HAMAP-Rule" id="MF_00020"/>
    </source>
</evidence>
<dbReference type="EC" id="2.7.2.1" evidence="1"/>
<dbReference type="EMBL" id="AE016822">
    <property type="protein sequence ID" value="AAT88358.1"/>
    <property type="molecule type" value="Genomic_DNA"/>
</dbReference>
<dbReference type="RefSeq" id="WP_011185361.1">
    <property type="nucleotide sequence ID" value="NC_006087.1"/>
</dbReference>
<dbReference type="SMR" id="Q6AGY7"/>
<dbReference type="STRING" id="281090.Lxx03420"/>
<dbReference type="KEGG" id="lxx:Lxx03420"/>
<dbReference type="eggNOG" id="COG0282">
    <property type="taxonomic scope" value="Bacteria"/>
</dbReference>
<dbReference type="HOGENOM" id="CLU_020352_0_1_11"/>
<dbReference type="UniPathway" id="UPA00340">
    <property type="reaction ID" value="UER00458"/>
</dbReference>
<dbReference type="Proteomes" id="UP000001306">
    <property type="component" value="Chromosome"/>
</dbReference>
<dbReference type="GO" id="GO:0005737">
    <property type="term" value="C:cytoplasm"/>
    <property type="evidence" value="ECO:0007669"/>
    <property type="project" value="UniProtKB-SubCell"/>
</dbReference>
<dbReference type="GO" id="GO:0008776">
    <property type="term" value="F:acetate kinase activity"/>
    <property type="evidence" value="ECO:0007669"/>
    <property type="project" value="UniProtKB-UniRule"/>
</dbReference>
<dbReference type="GO" id="GO:0005524">
    <property type="term" value="F:ATP binding"/>
    <property type="evidence" value="ECO:0007669"/>
    <property type="project" value="UniProtKB-KW"/>
</dbReference>
<dbReference type="GO" id="GO:0000287">
    <property type="term" value="F:magnesium ion binding"/>
    <property type="evidence" value="ECO:0007669"/>
    <property type="project" value="UniProtKB-UniRule"/>
</dbReference>
<dbReference type="GO" id="GO:0006083">
    <property type="term" value="P:acetate metabolic process"/>
    <property type="evidence" value="ECO:0007669"/>
    <property type="project" value="TreeGrafter"/>
</dbReference>
<dbReference type="GO" id="GO:0006085">
    <property type="term" value="P:acetyl-CoA biosynthetic process"/>
    <property type="evidence" value="ECO:0007669"/>
    <property type="project" value="UniProtKB-UniRule"/>
</dbReference>
<dbReference type="CDD" id="cd24010">
    <property type="entry name" value="ASKHA_NBD_AcK_PK"/>
    <property type="match status" value="1"/>
</dbReference>
<dbReference type="Gene3D" id="3.30.420.40">
    <property type="match status" value="2"/>
</dbReference>
<dbReference type="HAMAP" id="MF_00020">
    <property type="entry name" value="Acetate_kinase"/>
    <property type="match status" value="1"/>
</dbReference>
<dbReference type="InterPro" id="IPR004372">
    <property type="entry name" value="Ac/propionate_kinase"/>
</dbReference>
<dbReference type="InterPro" id="IPR000890">
    <property type="entry name" value="Aliphatic_acid_kin_short-chain"/>
</dbReference>
<dbReference type="InterPro" id="IPR023865">
    <property type="entry name" value="Aliphatic_acid_kinase_CS"/>
</dbReference>
<dbReference type="InterPro" id="IPR043129">
    <property type="entry name" value="ATPase_NBD"/>
</dbReference>
<dbReference type="NCBIfam" id="TIGR00016">
    <property type="entry name" value="ackA"/>
    <property type="match status" value="1"/>
</dbReference>
<dbReference type="PANTHER" id="PTHR21060">
    <property type="entry name" value="ACETATE KINASE"/>
    <property type="match status" value="1"/>
</dbReference>
<dbReference type="PANTHER" id="PTHR21060:SF15">
    <property type="entry name" value="ACETATE KINASE-RELATED"/>
    <property type="match status" value="1"/>
</dbReference>
<dbReference type="Pfam" id="PF00871">
    <property type="entry name" value="Acetate_kinase"/>
    <property type="match status" value="1"/>
</dbReference>
<dbReference type="PIRSF" id="PIRSF000722">
    <property type="entry name" value="Acetate_prop_kin"/>
    <property type="match status" value="1"/>
</dbReference>
<dbReference type="PRINTS" id="PR00471">
    <property type="entry name" value="ACETATEKNASE"/>
</dbReference>
<dbReference type="SUPFAM" id="SSF53067">
    <property type="entry name" value="Actin-like ATPase domain"/>
    <property type="match status" value="2"/>
</dbReference>
<dbReference type="PROSITE" id="PS01075">
    <property type="entry name" value="ACETATE_KINASE_1"/>
    <property type="match status" value="1"/>
</dbReference>
<dbReference type="PROSITE" id="PS01076">
    <property type="entry name" value="ACETATE_KINASE_2"/>
    <property type="match status" value="1"/>
</dbReference>
<protein>
    <recommendedName>
        <fullName evidence="1">Acetate kinase</fullName>
        <ecNumber evidence="1">2.7.2.1</ecNumber>
    </recommendedName>
    <alternativeName>
        <fullName evidence="1">Acetokinase</fullName>
    </alternativeName>
</protein>
<keyword id="KW-0067">ATP-binding</keyword>
<keyword id="KW-0963">Cytoplasm</keyword>
<keyword id="KW-0418">Kinase</keyword>
<keyword id="KW-0460">Magnesium</keyword>
<keyword id="KW-0479">Metal-binding</keyword>
<keyword id="KW-0547">Nucleotide-binding</keyword>
<keyword id="KW-1185">Reference proteome</keyword>
<keyword id="KW-0808">Transferase</keyword>
<proteinExistence type="inferred from homology"/>
<comment type="function">
    <text evidence="1">Catalyzes the formation of acetyl phosphate from acetate and ATP. Can also catalyze the reverse reaction.</text>
</comment>
<comment type="catalytic activity">
    <reaction evidence="1">
        <text>acetate + ATP = acetyl phosphate + ADP</text>
        <dbReference type="Rhea" id="RHEA:11352"/>
        <dbReference type="ChEBI" id="CHEBI:22191"/>
        <dbReference type="ChEBI" id="CHEBI:30089"/>
        <dbReference type="ChEBI" id="CHEBI:30616"/>
        <dbReference type="ChEBI" id="CHEBI:456216"/>
        <dbReference type="EC" id="2.7.2.1"/>
    </reaction>
</comment>
<comment type="cofactor">
    <cofactor evidence="1">
        <name>Mg(2+)</name>
        <dbReference type="ChEBI" id="CHEBI:18420"/>
    </cofactor>
    <cofactor evidence="1">
        <name>Mn(2+)</name>
        <dbReference type="ChEBI" id="CHEBI:29035"/>
    </cofactor>
    <text evidence="1">Mg(2+). Can also accept Mn(2+).</text>
</comment>
<comment type="pathway">
    <text evidence="1">Metabolic intermediate biosynthesis; acetyl-CoA biosynthesis; acetyl-CoA from acetate: step 1/2.</text>
</comment>
<comment type="subunit">
    <text evidence="1">Homodimer.</text>
</comment>
<comment type="subcellular location">
    <subcellularLocation>
        <location evidence="1">Cytoplasm</location>
    </subcellularLocation>
</comment>
<comment type="similarity">
    <text evidence="1">Belongs to the acetokinase family.</text>
</comment>
<organism>
    <name type="scientific">Leifsonia xyli subsp. xyli (strain CTCB07)</name>
    <dbReference type="NCBI Taxonomy" id="281090"/>
    <lineage>
        <taxon>Bacteria</taxon>
        <taxon>Bacillati</taxon>
        <taxon>Actinomycetota</taxon>
        <taxon>Actinomycetes</taxon>
        <taxon>Micrococcales</taxon>
        <taxon>Microbacteriaceae</taxon>
        <taxon>Leifsonia</taxon>
    </lineage>
</organism>